<keyword id="KW-0143">Chaperone</keyword>
<keyword id="KW-0963">Cytoplasm</keyword>
<keyword id="KW-0346">Stress response</keyword>
<gene>
    <name evidence="1" type="primary">grpE</name>
    <name type="ordered locus">Bcen_0266</name>
</gene>
<comment type="function">
    <text evidence="1">Participates actively in the response to hyperosmotic and heat shock by preventing the aggregation of stress-denatured proteins, in association with DnaK and GrpE. It is the nucleotide exchange factor for DnaK and may function as a thermosensor. Unfolded proteins bind initially to DnaJ; upon interaction with the DnaJ-bound protein, DnaK hydrolyzes its bound ATP, resulting in the formation of a stable complex. GrpE releases ADP from DnaK; ATP binding to DnaK triggers the release of the substrate protein, thus completing the reaction cycle. Several rounds of ATP-dependent interactions between DnaJ, DnaK and GrpE are required for fully efficient folding.</text>
</comment>
<comment type="subunit">
    <text evidence="1">Homodimer.</text>
</comment>
<comment type="subcellular location">
    <subcellularLocation>
        <location evidence="1">Cytoplasm</location>
    </subcellularLocation>
</comment>
<comment type="similarity">
    <text evidence="1">Belongs to the GrpE family.</text>
</comment>
<reference key="1">
    <citation type="submission" date="2006-05" db="EMBL/GenBank/DDBJ databases">
        <title>Complete sequence of chromosome 1 of Burkholderia cenocepacia AU 1054.</title>
        <authorList>
            <consortium name="US DOE Joint Genome Institute"/>
            <person name="Copeland A."/>
            <person name="Lucas S."/>
            <person name="Lapidus A."/>
            <person name="Barry K."/>
            <person name="Detter J.C."/>
            <person name="Glavina del Rio T."/>
            <person name="Hammon N."/>
            <person name="Israni S."/>
            <person name="Dalin E."/>
            <person name="Tice H."/>
            <person name="Pitluck S."/>
            <person name="Chain P."/>
            <person name="Malfatti S."/>
            <person name="Shin M."/>
            <person name="Vergez L."/>
            <person name="Schmutz J."/>
            <person name="Larimer F."/>
            <person name="Land M."/>
            <person name="Hauser L."/>
            <person name="Kyrpides N."/>
            <person name="Lykidis A."/>
            <person name="LiPuma J.J."/>
            <person name="Konstantinidis K."/>
            <person name="Tiedje J.M."/>
            <person name="Richardson P."/>
        </authorList>
    </citation>
    <scope>NUCLEOTIDE SEQUENCE [LARGE SCALE GENOMIC DNA]</scope>
    <source>
        <strain>AU 1054</strain>
    </source>
</reference>
<feature type="chain" id="PRO_1000053550" description="Protein GrpE">
    <location>
        <begin position="1"/>
        <end position="181"/>
    </location>
</feature>
<feature type="region of interest" description="Disordered" evidence="2">
    <location>
        <begin position="1"/>
        <end position="33"/>
    </location>
</feature>
<feature type="compositionally biased region" description="Polar residues" evidence="2">
    <location>
        <begin position="1"/>
        <end position="12"/>
    </location>
</feature>
<feature type="compositionally biased region" description="Low complexity" evidence="2">
    <location>
        <begin position="21"/>
        <end position="33"/>
    </location>
</feature>
<proteinExistence type="inferred from homology"/>
<sequence>MENTQENPTTPSAEDIGSEKQAAQGAAPAAEAADAALAEAQAKVAELQESFLRAKAETENVRRRAQDDVSKAHKFAIESFAEHLLPVLDSLEAAVNDTSGDIAKVREGVELTLRQLTSALEKGRVVAINPIGEKFDPHQHQAISMVPAEQEPNTVVSVLQKGYTIADRVLRPALVTVAQPK</sequence>
<organism>
    <name type="scientific">Burkholderia orbicola (strain AU 1054)</name>
    <dbReference type="NCBI Taxonomy" id="331271"/>
    <lineage>
        <taxon>Bacteria</taxon>
        <taxon>Pseudomonadati</taxon>
        <taxon>Pseudomonadota</taxon>
        <taxon>Betaproteobacteria</taxon>
        <taxon>Burkholderiales</taxon>
        <taxon>Burkholderiaceae</taxon>
        <taxon>Burkholderia</taxon>
        <taxon>Burkholderia cepacia complex</taxon>
        <taxon>Burkholderia orbicola</taxon>
    </lineage>
</organism>
<protein>
    <recommendedName>
        <fullName evidence="1">Protein GrpE</fullName>
    </recommendedName>
    <alternativeName>
        <fullName evidence="1">HSP-70 cofactor</fullName>
    </alternativeName>
</protein>
<evidence type="ECO:0000255" key="1">
    <source>
        <dbReference type="HAMAP-Rule" id="MF_01151"/>
    </source>
</evidence>
<evidence type="ECO:0000256" key="2">
    <source>
        <dbReference type="SAM" id="MobiDB-lite"/>
    </source>
</evidence>
<accession>Q1BYX5</accession>
<dbReference type="EMBL" id="CP000378">
    <property type="protein sequence ID" value="ABF75180.1"/>
    <property type="molecule type" value="Genomic_DNA"/>
</dbReference>
<dbReference type="SMR" id="Q1BYX5"/>
<dbReference type="HOGENOM" id="CLU_057217_6_1_4"/>
<dbReference type="GO" id="GO:0005829">
    <property type="term" value="C:cytosol"/>
    <property type="evidence" value="ECO:0007669"/>
    <property type="project" value="TreeGrafter"/>
</dbReference>
<dbReference type="GO" id="GO:0000774">
    <property type="term" value="F:adenyl-nucleotide exchange factor activity"/>
    <property type="evidence" value="ECO:0007669"/>
    <property type="project" value="InterPro"/>
</dbReference>
<dbReference type="GO" id="GO:0042803">
    <property type="term" value="F:protein homodimerization activity"/>
    <property type="evidence" value="ECO:0007669"/>
    <property type="project" value="InterPro"/>
</dbReference>
<dbReference type="GO" id="GO:0051087">
    <property type="term" value="F:protein-folding chaperone binding"/>
    <property type="evidence" value="ECO:0007669"/>
    <property type="project" value="InterPro"/>
</dbReference>
<dbReference type="GO" id="GO:0051082">
    <property type="term" value="F:unfolded protein binding"/>
    <property type="evidence" value="ECO:0007669"/>
    <property type="project" value="TreeGrafter"/>
</dbReference>
<dbReference type="GO" id="GO:0006457">
    <property type="term" value="P:protein folding"/>
    <property type="evidence" value="ECO:0007669"/>
    <property type="project" value="InterPro"/>
</dbReference>
<dbReference type="CDD" id="cd00446">
    <property type="entry name" value="GrpE"/>
    <property type="match status" value="1"/>
</dbReference>
<dbReference type="FunFam" id="2.30.22.10:FF:000001">
    <property type="entry name" value="Protein GrpE"/>
    <property type="match status" value="1"/>
</dbReference>
<dbReference type="Gene3D" id="3.90.20.20">
    <property type="match status" value="1"/>
</dbReference>
<dbReference type="Gene3D" id="2.30.22.10">
    <property type="entry name" value="Head domain of nucleotide exchange factor GrpE"/>
    <property type="match status" value="1"/>
</dbReference>
<dbReference type="HAMAP" id="MF_01151">
    <property type="entry name" value="GrpE"/>
    <property type="match status" value="1"/>
</dbReference>
<dbReference type="InterPro" id="IPR000740">
    <property type="entry name" value="GrpE"/>
</dbReference>
<dbReference type="InterPro" id="IPR013805">
    <property type="entry name" value="GrpE_coiled_coil"/>
</dbReference>
<dbReference type="InterPro" id="IPR009012">
    <property type="entry name" value="GrpE_head"/>
</dbReference>
<dbReference type="NCBIfam" id="NF010737">
    <property type="entry name" value="PRK14139.1"/>
    <property type="match status" value="1"/>
</dbReference>
<dbReference type="NCBIfam" id="NF010738">
    <property type="entry name" value="PRK14140.1"/>
    <property type="match status" value="1"/>
</dbReference>
<dbReference type="NCBIfam" id="NF010748">
    <property type="entry name" value="PRK14150.1"/>
    <property type="match status" value="1"/>
</dbReference>
<dbReference type="PANTHER" id="PTHR21237">
    <property type="entry name" value="GRPE PROTEIN"/>
    <property type="match status" value="1"/>
</dbReference>
<dbReference type="PANTHER" id="PTHR21237:SF23">
    <property type="entry name" value="GRPE PROTEIN HOMOLOG, MITOCHONDRIAL"/>
    <property type="match status" value="1"/>
</dbReference>
<dbReference type="Pfam" id="PF01025">
    <property type="entry name" value="GrpE"/>
    <property type="match status" value="1"/>
</dbReference>
<dbReference type="PRINTS" id="PR00773">
    <property type="entry name" value="GRPEPROTEIN"/>
</dbReference>
<dbReference type="SUPFAM" id="SSF58014">
    <property type="entry name" value="Coiled-coil domain of nucleotide exchange factor GrpE"/>
    <property type="match status" value="1"/>
</dbReference>
<dbReference type="SUPFAM" id="SSF51064">
    <property type="entry name" value="Head domain of nucleotide exchange factor GrpE"/>
    <property type="match status" value="1"/>
</dbReference>
<dbReference type="PROSITE" id="PS01071">
    <property type="entry name" value="GRPE"/>
    <property type="match status" value="1"/>
</dbReference>
<name>GRPE_BURO1</name>